<accession>P66093</accession>
<accession>Q8DYG2</accession>
<accession>Q8E425</accession>
<feature type="chain" id="PRO_0000125741" description="Large ribosomal subunit protein uL1">
    <location>
        <begin position="1"/>
        <end position="229"/>
    </location>
</feature>
<name>RL1_STRA3</name>
<reference key="1">
    <citation type="journal article" date="2002" name="Mol. Microbiol.">
        <title>Genome sequence of Streptococcus agalactiae, a pathogen causing invasive neonatal disease.</title>
        <authorList>
            <person name="Glaser P."/>
            <person name="Rusniok C."/>
            <person name="Buchrieser C."/>
            <person name="Chevalier F."/>
            <person name="Frangeul L."/>
            <person name="Msadek T."/>
            <person name="Zouine M."/>
            <person name="Couve E."/>
            <person name="Lalioui L."/>
            <person name="Poyart C."/>
            <person name="Trieu-Cuot P."/>
            <person name="Kunst F."/>
        </authorList>
    </citation>
    <scope>NUCLEOTIDE SEQUENCE [LARGE SCALE GENOMIC DNA]</scope>
    <source>
        <strain>NEM316</strain>
    </source>
</reference>
<keyword id="KW-0678">Repressor</keyword>
<keyword id="KW-0687">Ribonucleoprotein</keyword>
<keyword id="KW-0689">Ribosomal protein</keyword>
<keyword id="KW-0694">RNA-binding</keyword>
<keyword id="KW-0699">rRNA-binding</keyword>
<keyword id="KW-0810">Translation regulation</keyword>
<keyword id="KW-0820">tRNA-binding</keyword>
<organism>
    <name type="scientific">Streptococcus agalactiae serotype III (strain NEM316)</name>
    <dbReference type="NCBI Taxonomy" id="211110"/>
    <lineage>
        <taxon>Bacteria</taxon>
        <taxon>Bacillati</taxon>
        <taxon>Bacillota</taxon>
        <taxon>Bacilli</taxon>
        <taxon>Lactobacillales</taxon>
        <taxon>Streptococcaceae</taxon>
        <taxon>Streptococcus</taxon>
    </lineage>
</organism>
<comment type="function">
    <text evidence="1">Binds directly to 23S rRNA. The L1 stalk is quite mobile in the ribosome, and is involved in E site tRNA release.</text>
</comment>
<comment type="function">
    <text evidence="1">Protein L1 is also a translational repressor protein, it controls the translation of the L11 operon by binding to its mRNA.</text>
</comment>
<comment type="subunit">
    <text evidence="1">Part of the 50S ribosomal subunit.</text>
</comment>
<comment type="similarity">
    <text evidence="1">Belongs to the universal ribosomal protein uL1 family.</text>
</comment>
<proteinExistence type="inferred from homology"/>
<sequence>MAKKSKNLRAALEKIDSTKAYSVEEAVALAKETNFAKFDATVEVSYNLNIDVKKADQQIRGAMVLPAGTGKTSRVLVFARGAKAEEAKAAGADFVGEDDLVAKIQGGWLDFDVVIATPDMMALVGRLGRVLGPRNLMPNPKTGTVTMDVAKAVEESKGGKITYRADKAGNVQALIGKVSFDDAKLVDNFKAFNDVIVKAKPATAKGTYITNLSITTTQGVGIKVDPNSL</sequence>
<gene>
    <name evidence="1" type="primary">rplA</name>
    <name type="ordered locus">gbs1578</name>
</gene>
<protein>
    <recommendedName>
        <fullName evidence="1">Large ribosomal subunit protein uL1</fullName>
    </recommendedName>
    <alternativeName>
        <fullName evidence="2">50S ribosomal protein L1</fullName>
    </alternativeName>
</protein>
<dbReference type="EMBL" id="AL766852">
    <property type="protein sequence ID" value="CAD47237.1"/>
    <property type="molecule type" value="Genomic_DNA"/>
</dbReference>
<dbReference type="RefSeq" id="WP_001085664.1">
    <property type="nucleotide sequence ID" value="NC_004368.1"/>
</dbReference>
<dbReference type="SMR" id="P66093"/>
<dbReference type="GeneID" id="66886374"/>
<dbReference type="KEGG" id="san:rplA"/>
<dbReference type="eggNOG" id="COG0081">
    <property type="taxonomic scope" value="Bacteria"/>
</dbReference>
<dbReference type="HOGENOM" id="CLU_062853_0_0_9"/>
<dbReference type="Proteomes" id="UP000000823">
    <property type="component" value="Chromosome"/>
</dbReference>
<dbReference type="GO" id="GO:0015934">
    <property type="term" value="C:large ribosomal subunit"/>
    <property type="evidence" value="ECO:0007669"/>
    <property type="project" value="InterPro"/>
</dbReference>
<dbReference type="GO" id="GO:0019843">
    <property type="term" value="F:rRNA binding"/>
    <property type="evidence" value="ECO:0007669"/>
    <property type="project" value="UniProtKB-UniRule"/>
</dbReference>
<dbReference type="GO" id="GO:0003735">
    <property type="term" value="F:structural constituent of ribosome"/>
    <property type="evidence" value="ECO:0007669"/>
    <property type="project" value="InterPro"/>
</dbReference>
<dbReference type="GO" id="GO:0000049">
    <property type="term" value="F:tRNA binding"/>
    <property type="evidence" value="ECO:0007669"/>
    <property type="project" value="UniProtKB-KW"/>
</dbReference>
<dbReference type="GO" id="GO:0006417">
    <property type="term" value="P:regulation of translation"/>
    <property type="evidence" value="ECO:0007669"/>
    <property type="project" value="UniProtKB-KW"/>
</dbReference>
<dbReference type="GO" id="GO:0006412">
    <property type="term" value="P:translation"/>
    <property type="evidence" value="ECO:0007669"/>
    <property type="project" value="UniProtKB-UniRule"/>
</dbReference>
<dbReference type="CDD" id="cd00403">
    <property type="entry name" value="Ribosomal_L1"/>
    <property type="match status" value="1"/>
</dbReference>
<dbReference type="FunFam" id="3.40.50.790:FF:000001">
    <property type="entry name" value="50S ribosomal protein L1"/>
    <property type="match status" value="1"/>
</dbReference>
<dbReference type="Gene3D" id="3.30.190.20">
    <property type="match status" value="1"/>
</dbReference>
<dbReference type="Gene3D" id="3.40.50.790">
    <property type="match status" value="1"/>
</dbReference>
<dbReference type="HAMAP" id="MF_01318_B">
    <property type="entry name" value="Ribosomal_uL1_B"/>
    <property type="match status" value="1"/>
</dbReference>
<dbReference type="InterPro" id="IPR005878">
    <property type="entry name" value="Ribosom_uL1_bac-type"/>
</dbReference>
<dbReference type="InterPro" id="IPR002143">
    <property type="entry name" value="Ribosomal_uL1"/>
</dbReference>
<dbReference type="InterPro" id="IPR023674">
    <property type="entry name" value="Ribosomal_uL1-like"/>
</dbReference>
<dbReference type="InterPro" id="IPR028364">
    <property type="entry name" value="Ribosomal_uL1/biogenesis"/>
</dbReference>
<dbReference type="InterPro" id="IPR016095">
    <property type="entry name" value="Ribosomal_uL1_3-a/b-sand"/>
</dbReference>
<dbReference type="InterPro" id="IPR023673">
    <property type="entry name" value="Ribosomal_uL1_CS"/>
</dbReference>
<dbReference type="NCBIfam" id="TIGR01169">
    <property type="entry name" value="rplA_bact"/>
    <property type="match status" value="1"/>
</dbReference>
<dbReference type="PANTHER" id="PTHR36427">
    <property type="entry name" value="54S RIBOSOMAL PROTEIN L1, MITOCHONDRIAL"/>
    <property type="match status" value="1"/>
</dbReference>
<dbReference type="PANTHER" id="PTHR36427:SF3">
    <property type="entry name" value="LARGE RIBOSOMAL SUBUNIT PROTEIN UL1M"/>
    <property type="match status" value="1"/>
</dbReference>
<dbReference type="Pfam" id="PF00687">
    <property type="entry name" value="Ribosomal_L1"/>
    <property type="match status" value="1"/>
</dbReference>
<dbReference type="PIRSF" id="PIRSF002155">
    <property type="entry name" value="Ribosomal_L1"/>
    <property type="match status" value="1"/>
</dbReference>
<dbReference type="SUPFAM" id="SSF56808">
    <property type="entry name" value="Ribosomal protein L1"/>
    <property type="match status" value="1"/>
</dbReference>
<dbReference type="PROSITE" id="PS01199">
    <property type="entry name" value="RIBOSOMAL_L1"/>
    <property type="match status" value="1"/>
</dbReference>
<evidence type="ECO:0000255" key="1">
    <source>
        <dbReference type="HAMAP-Rule" id="MF_01318"/>
    </source>
</evidence>
<evidence type="ECO:0000305" key="2"/>